<organism>
    <name type="scientific">Polaromonas naphthalenivorans (strain CJ2)</name>
    <dbReference type="NCBI Taxonomy" id="365044"/>
    <lineage>
        <taxon>Bacteria</taxon>
        <taxon>Pseudomonadati</taxon>
        <taxon>Pseudomonadota</taxon>
        <taxon>Betaproteobacteria</taxon>
        <taxon>Burkholderiales</taxon>
        <taxon>Comamonadaceae</taxon>
        <taxon>Polaromonas</taxon>
    </lineage>
</organism>
<sequence>MSLRIYNTLSRAVEDFSPLVPGQVRMYVCGMTIYDLCHIGHARMMMAFDVVQRWLKASGYEVRYVRNITDIDDKIIKRAVERGITIRALTDEMIAAMHQDIGALGIEPPTLEPRATEYVPQMLAMIGKLEEKGLAYRGSSGDMNYAVRKFPGYGKLSGKSLDELRAGERVAVLEGKDDPLDFVLWKSAKESEPEDAKWDSAALGHDYGKGRPGWHIECSAMSCQTLGETFDIHGGGADLQFPHHENEIAQSEGANGKPLARFWVHNGFVRVDNEKMSKSLGNFFTIRDVLQKYDAETIRFFIIRAHYRSALNYSDAHLDDARNSLKRLYTALALVAPATVEIDWADPFAARFKAAMDEDFGTPEAIAVLFELAGEVNKTHSAERAGLLKSLGACLGLLQGEPSAYLQAGAGLDDAAIQALITQRADAKKARDFAAADRIRTELLGQGIVLKDSPLGTTWEVQS</sequence>
<evidence type="ECO:0000255" key="1">
    <source>
        <dbReference type="HAMAP-Rule" id="MF_00041"/>
    </source>
</evidence>
<reference key="1">
    <citation type="journal article" date="2009" name="Environ. Microbiol.">
        <title>The genome of Polaromonas naphthalenivorans strain CJ2, isolated from coal tar-contaminated sediment, reveals physiological and metabolic versatility and evolution through extensive horizontal gene transfer.</title>
        <authorList>
            <person name="Yagi J.M."/>
            <person name="Sims D."/>
            <person name="Brettin T."/>
            <person name="Bruce D."/>
            <person name="Madsen E.L."/>
        </authorList>
    </citation>
    <scope>NUCLEOTIDE SEQUENCE [LARGE SCALE GENOMIC DNA]</scope>
    <source>
        <strain>CJ2</strain>
    </source>
</reference>
<comment type="catalytic activity">
    <reaction evidence="1">
        <text>tRNA(Cys) + L-cysteine + ATP = L-cysteinyl-tRNA(Cys) + AMP + diphosphate</text>
        <dbReference type="Rhea" id="RHEA:17773"/>
        <dbReference type="Rhea" id="RHEA-COMP:9661"/>
        <dbReference type="Rhea" id="RHEA-COMP:9679"/>
        <dbReference type="ChEBI" id="CHEBI:30616"/>
        <dbReference type="ChEBI" id="CHEBI:33019"/>
        <dbReference type="ChEBI" id="CHEBI:35235"/>
        <dbReference type="ChEBI" id="CHEBI:78442"/>
        <dbReference type="ChEBI" id="CHEBI:78517"/>
        <dbReference type="ChEBI" id="CHEBI:456215"/>
        <dbReference type="EC" id="6.1.1.16"/>
    </reaction>
</comment>
<comment type="cofactor">
    <cofactor evidence="1">
        <name>Zn(2+)</name>
        <dbReference type="ChEBI" id="CHEBI:29105"/>
    </cofactor>
    <text evidence="1">Binds 1 zinc ion per subunit.</text>
</comment>
<comment type="subunit">
    <text evidence="1">Monomer.</text>
</comment>
<comment type="subcellular location">
    <subcellularLocation>
        <location evidence="1">Cytoplasm</location>
    </subcellularLocation>
</comment>
<comment type="similarity">
    <text evidence="1">Belongs to the class-I aminoacyl-tRNA synthetase family.</text>
</comment>
<feature type="chain" id="PRO_0000332868" description="Cysteine--tRNA ligase">
    <location>
        <begin position="1"/>
        <end position="463"/>
    </location>
</feature>
<feature type="short sequence motif" description="'HIGH' region">
    <location>
        <begin position="31"/>
        <end position="41"/>
    </location>
</feature>
<feature type="short sequence motif" description="'KMSKS' region">
    <location>
        <begin position="275"/>
        <end position="279"/>
    </location>
</feature>
<feature type="binding site" evidence="1">
    <location>
        <position position="29"/>
    </location>
    <ligand>
        <name>Zn(2+)</name>
        <dbReference type="ChEBI" id="CHEBI:29105"/>
    </ligand>
</feature>
<feature type="binding site" evidence="1">
    <location>
        <position position="218"/>
    </location>
    <ligand>
        <name>Zn(2+)</name>
        <dbReference type="ChEBI" id="CHEBI:29105"/>
    </ligand>
</feature>
<feature type="binding site" evidence="1">
    <location>
        <position position="243"/>
    </location>
    <ligand>
        <name>Zn(2+)</name>
        <dbReference type="ChEBI" id="CHEBI:29105"/>
    </ligand>
</feature>
<feature type="binding site" evidence="1">
    <location>
        <position position="247"/>
    </location>
    <ligand>
        <name>Zn(2+)</name>
        <dbReference type="ChEBI" id="CHEBI:29105"/>
    </ligand>
</feature>
<feature type="binding site" evidence="1">
    <location>
        <position position="278"/>
    </location>
    <ligand>
        <name>ATP</name>
        <dbReference type="ChEBI" id="CHEBI:30616"/>
    </ligand>
</feature>
<dbReference type="EC" id="6.1.1.16" evidence="1"/>
<dbReference type="EMBL" id="CP000529">
    <property type="protein sequence ID" value="ABM38192.1"/>
    <property type="molecule type" value="Genomic_DNA"/>
</dbReference>
<dbReference type="RefSeq" id="WP_011802268.1">
    <property type="nucleotide sequence ID" value="NC_008781.1"/>
</dbReference>
<dbReference type="SMR" id="A1VRB4"/>
<dbReference type="STRING" id="365044.Pnap_2893"/>
<dbReference type="KEGG" id="pna:Pnap_2893"/>
<dbReference type="eggNOG" id="COG0215">
    <property type="taxonomic scope" value="Bacteria"/>
</dbReference>
<dbReference type="HOGENOM" id="CLU_013528_0_1_4"/>
<dbReference type="OrthoDB" id="9815130at2"/>
<dbReference type="Proteomes" id="UP000000644">
    <property type="component" value="Chromosome"/>
</dbReference>
<dbReference type="GO" id="GO:0005829">
    <property type="term" value="C:cytosol"/>
    <property type="evidence" value="ECO:0007669"/>
    <property type="project" value="TreeGrafter"/>
</dbReference>
<dbReference type="GO" id="GO:0005524">
    <property type="term" value="F:ATP binding"/>
    <property type="evidence" value="ECO:0007669"/>
    <property type="project" value="UniProtKB-UniRule"/>
</dbReference>
<dbReference type="GO" id="GO:0004817">
    <property type="term" value="F:cysteine-tRNA ligase activity"/>
    <property type="evidence" value="ECO:0007669"/>
    <property type="project" value="UniProtKB-UniRule"/>
</dbReference>
<dbReference type="GO" id="GO:0008270">
    <property type="term" value="F:zinc ion binding"/>
    <property type="evidence" value="ECO:0007669"/>
    <property type="project" value="UniProtKB-UniRule"/>
</dbReference>
<dbReference type="GO" id="GO:0006423">
    <property type="term" value="P:cysteinyl-tRNA aminoacylation"/>
    <property type="evidence" value="ECO:0007669"/>
    <property type="project" value="UniProtKB-UniRule"/>
</dbReference>
<dbReference type="CDD" id="cd07963">
    <property type="entry name" value="Anticodon_Ia_Cys"/>
    <property type="match status" value="1"/>
</dbReference>
<dbReference type="CDD" id="cd00672">
    <property type="entry name" value="CysRS_core"/>
    <property type="match status" value="1"/>
</dbReference>
<dbReference type="FunFam" id="3.40.50.620:FF:000009">
    <property type="entry name" value="Cysteine--tRNA ligase"/>
    <property type="match status" value="1"/>
</dbReference>
<dbReference type="Gene3D" id="1.20.120.1910">
    <property type="entry name" value="Cysteine-tRNA ligase, C-terminal anti-codon recognition domain"/>
    <property type="match status" value="1"/>
</dbReference>
<dbReference type="Gene3D" id="3.40.50.620">
    <property type="entry name" value="HUPs"/>
    <property type="match status" value="1"/>
</dbReference>
<dbReference type="HAMAP" id="MF_00041">
    <property type="entry name" value="Cys_tRNA_synth"/>
    <property type="match status" value="1"/>
</dbReference>
<dbReference type="InterPro" id="IPR015803">
    <property type="entry name" value="Cys-tRNA-ligase"/>
</dbReference>
<dbReference type="InterPro" id="IPR015273">
    <property type="entry name" value="Cys-tRNA-synt_Ia_DALR"/>
</dbReference>
<dbReference type="InterPro" id="IPR024909">
    <property type="entry name" value="Cys-tRNA/MSH_ligase"/>
</dbReference>
<dbReference type="InterPro" id="IPR056411">
    <property type="entry name" value="CysS_C"/>
</dbReference>
<dbReference type="InterPro" id="IPR014729">
    <property type="entry name" value="Rossmann-like_a/b/a_fold"/>
</dbReference>
<dbReference type="InterPro" id="IPR032678">
    <property type="entry name" value="tRNA-synt_1_cat_dom"/>
</dbReference>
<dbReference type="InterPro" id="IPR009080">
    <property type="entry name" value="tRNAsynth_Ia_anticodon-bd"/>
</dbReference>
<dbReference type="NCBIfam" id="TIGR00435">
    <property type="entry name" value="cysS"/>
    <property type="match status" value="1"/>
</dbReference>
<dbReference type="PANTHER" id="PTHR10890:SF3">
    <property type="entry name" value="CYSTEINE--TRNA LIGASE, CYTOPLASMIC"/>
    <property type="match status" value="1"/>
</dbReference>
<dbReference type="PANTHER" id="PTHR10890">
    <property type="entry name" value="CYSTEINYL-TRNA SYNTHETASE"/>
    <property type="match status" value="1"/>
</dbReference>
<dbReference type="Pfam" id="PF23493">
    <property type="entry name" value="CysS_C"/>
    <property type="match status" value="1"/>
</dbReference>
<dbReference type="Pfam" id="PF09190">
    <property type="entry name" value="DALR_2"/>
    <property type="match status" value="1"/>
</dbReference>
<dbReference type="Pfam" id="PF01406">
    <property type="entry name" value="tRNA-synt_1e"/>
    <property type="match status" value="1"/>
</dbReference>
<dbReference type="PRINTS" id="PR00983">
    <property type="entry name" value="TRNASYNTHCYS"/>
</dbReference>
<dbReference type="SMART" id="SM00840">
    <property type="entry name" value="DALR_2"/>
    <property type="match status" value="1"/>
</dbReference>
<dbReference type="SUPFAM" id="SSF47323">
    <property type="entry name" value="Anticodon-binding domain of a subclass of class I aminoacyl-tRNA synthetases"/>
    <property type="match status" value="1"/>
</dbReference>
<dbReference type="SUPFAM" id="SSF52374">
    <property type="entry name" value="Nucleotidylyl transferase"/>
    <property type="match status" value="1"/>
</dbReference>
<keyword id="KW-0030">Aminoacyl-tRNA synthetase</keyword>
<keyword id="KW-0067">ATP-binding</keyword>
<keyword id="KW-0963">Cytoplasm</keyword>
<keyword id="KW-0436">Ligase</keyword>
<keyword id="KW-0479">Metal-binding</keyword>
<keyword id="KW-0547">Nucleotide-binding</keyword>
<keyword id="KW-0648">Protein biosynthesis</keyword>
<keyword id="KW-1185">Reference proteome</keyword>
<keyword id="KW-0862">Zinc</keyword>
<name>SYC_POLNA</name>
<protein>
    <recommendedName>
        <fullName evidence="1">Cysteine--tRNA ligase</fullName>
        <ecNumber evidence="1">6.1.1.16</ecNumber>
    </recommendedName>
    <alternativeName>
        <fullName evidence="1">Cysteinyl-tRNA synthetase</fullName>
        <shortName evidence="1">CysRS</shortName>
    </alternativeName>
</protein>
<gene>
    <name evidence="1" type="primary">cysS</name>
    <name type="ordered locus">Pnap_2893</name>
</gene>
<proteinExistence type="inferred from homology"/>
<accession>A1VRB4</accession>